<proteinExistence type="evidence at protein level"/>
<organism>
    <name type="scientific">Bacillus subtilis</name>
    <dbReference type="NCBI Taxonomy" id="1423"/>
    <lineage>
        <taxon>Bacteria</taxon>
        <taxon>Bacillati</taxon>
        <taxon>Bacillota</taxon>
        <taxon>Bacilli</taxon>
        <taxon>Bacillales</taxon>
        <taxon>Bacillaceae</taxon>
        <taxon>Bacillus</taxon>
    </lineage>
</organism>
<accession>Q9R9J1</accession>
<gene>
    <name type="primary">mycA</name>
</gene>
<reference key="1">
    <citation type="journal article" date="1999" name="Proc. Natl. Acad. Sci. U.S.A.">
        <title>The mycosubtilin synthetase of Bacillus subtilis ATCC6633: a multifunctional hybrid between a peptide synthetase, an amino transferase, and a fatty acid synthase.</title>
        <authorList>
            <person name="Duitman E.H."/>
            <person name="Hamoen L.W."/>
            <person name="Rembold M."/>
            <person name="Venema G."/>
            <person name="Seitz H."/>
            <person name="Saenger W."/>
            <person name="Bernhard F."/>
            <person name="Reinhardt R."/>
            <person name="Schmidt M."/>
            <person name="Ullrich C."/>
            <person name="Stein T."/>
            <person name="Leenders F."/>
            <person name="Vater J."/>
        </authorList>
    </citation>
    <scope>NUCLEOTIDE SEQUENCE [GENOMIC DNA]</scope>
    <source>
        <strain>ATCC 6633 / PCI 219 / NRS 231</strain>
    </source>
</reference>
<reference key="2">
    <citation type="journal article" date="2005" name="J. Am. Chem. Soc.">
        <title>Characterization of a new tailoring domain in polyketide biogenesis: the amine transferase domain of MycA in the mycosubtilin gene cluster.</title>
        <authorList>
            <person name="Aron Z.D."/>
            <person name="Dorrestein P.C."/>
            <person name="Blackhall J.R."/>
            <person name="Kelleher N.L."/>
            <person name="Walsh C.T."/>
        </authorList>
    </citation>
    <scope>FUNCTION</scope>
    <scope>COFACTOR OF AMINOTRANSFERASE DOMAIN</scope>
</reference>
<sequence>MYTSQFQTLVDVIRNRSNISDRGIRFIESDKIETFVSYRQLFDEAQGFLGYLQHIGIQPKQEIVFQIQENKSFVVAFWACLLGGMIPVPVSIGEDNDHKLKVWRIWNILNNPFLLASETVLDKMKKFAADHDLQDFHHQLIEKSDIIQDRIYDHPASQYEPEADELAFIQFSSGSTGDPKGVMLTHHNLIHNTCAIRNALAIDLKDTLLSWMPLTHDMGLIACHLVPALAGINQNLMPTELFIRRPILWMKKAHEHKASILSSPNFGYNYFLKFLKDNKSYDWDLSHIRVIANGAEPILPELCDEFLTRCAAFNMKRSAILNVYGLAEASVGATFSNIGERFVPVYLHRDHLNLGERAVEVSKEDQNCASFVEVGKPIDYCQIRICNEANEGLEDGFIGHIQIKGENVTQGYYNNPESTNRALTPDGWVKTGDLGFIRKGNLVVTGREKDIIFVNGKNVYPHDIERVAIELEDIDLGRVAACGVYDQETRSREIVLFAVYKKSADRFAPLVKDIKKHLYQRGGWSIKEILPIRKLPKTTSGKVKRYELAEQYESGKFALESTKIKEFLEGHSTEPVQTPIHEIETALLSIFSEVMDGKKIHLNDHYFDMGATSLQLSQIAERIEQKFGCELTVADLFTYPSIADLAAFLVENHSEIKQTDTAKPSRSSSKDIAIIGMSLNVPGASNKSDFWHLLENGEHGIREYPAPRVKDAIDYLRSIKSERNEKQFVRGGYLDEIDRFDYSFFGLAPKTAKFMDPNQRLFLQSAWHAIEDAGYAGDTISGSQLGVYVGYSKVGYDYERLLSANYPEELHHYIVGNLPSVLASRIAYFLNLKGPAVTVDTACSSSLVAVHMACKALLTGDCEMALAGGIRTSLLPMRIGLDMESSDGLTKTFSKDSDGTGSGEGVAAVLLKPLQAAIRDGDHIYGVIKGSAINQDGTTVGITAPSPAAQTEVIEMAWKDAGIAPETLSFIEAHGTGTKLGDPVEFNGLCKAFEKVTEKKQFCAIGSVKANIGHLFEAAGIVGLIKSALMLNHKKIPPLAHFNKPNPLIPFHSSPFYVNQEVMDFTPEDRPLRGGISSFGFSGTNAHVVLEEYTPESEYAPEDGNDPHLFVLSAHTEASLYELTHQYRQYISDDSQSSLRSICYTASTGRAHLDYCLAMIVSSNQELIDKLTSLIQGERNLPQVHFGYKNIKEMQPAEKDNLSKQISDLMQHRPCTKDERITWLNRIAELYVQRAVIDWRAVYSNEVVQKTPLPLYPFERNRCWVEAVYESAKERKEKGEVALDINHTKTHIESFLKTVISNASGIRADEIDSNAHFIGFGLDSIMLTQVKKAIADEFNVDIPMERFFDTMNNIESVVDYLAENVPSAASTPPQESVTAQEELVISGAQPELEHQEHMLDKIIASQNQLIQQTLQAQLDSFNLLRNNSHFVSKESEISQDKTSLSPKSVTAKKNSAQEAKPYIPFQRQTLNEQVNYTPQQRQYLESFIEKYVDKTKGSKQYTDETRFAHANNRNLSSFRSYWKEMVYPIIAERSDGSRMWDIDGNEYIDITMGFGVNLFGHHPSFITQTVVDSTHSALPPLGPMSNVAGEVADRIRACTGVERVAFYNSGTEAVMVALRLARAATGRTKVVVFAGSYHGTFDGVLGVANTKGGAEPANPLAPGIPQSFMNDLIILHYNHPDSLDVIRNLGNELAAVLVEPVQSRRPDLQPESFLKELRAITQQSGTALIMDEIITGFRIGLGGAQEWFDIQADLVTYGKIIGGGQPLGIVAGKAEFMNTIDGGTWQYGDDSYPTDEAKRTFVAGTFNTHPLTMRMSLAVLRYLQAEGETLYERLNQKTTYLVDQLNSYFEQSQVPIRMVQFGSLFRFVSSVDNDLFFYHLNYKGVYVWEGRNCFLSTAHTSDDIAYIIQAVQETVKDLRRGGFIPEGPDSPNDGGHKEPETYELSPEQKQLAVVSQYGNDASAALNQSIMLKVKGAVQHTLLKQAVRNIVKRHDALRTVIHVDDEVQQVQARINVEIPIIDFTGYPNEQRESEVQKWLTEDAKRPFHFHEQKPLFRVHVLTSKQDEHLIVLTFHHIIADGWSIAVFVQELESTYAAIVQGSPLPSHEVVSFRQYLDWQQAQIENGHYEEGIRYWRQYLSEPIPQAILTSMSSSRYPHGYEGDRYTVTLDRPLSKAIKSLSIRMKNSVFATILGAFHLFLQQLTKQAGLVIGIPTAGQLHMKQPMLVGNCVNMVPVKNTASSESTLADYLGHMKENMDQVMRHQDVPMTLVASQLPHDQMPDMRIIFNLDRPFRKLHFGQMEAELIAYPIKCISYDLFLNVTEFDQEYVLDFDFNTSVISSEIMNKWGTGFVNLLKKMVEGDSASLDSLKMFSKEDQHDLLELYADHQLRISSTLDHKGVRAVYEEPENETELQIAQIWAELLGLEKVGRSDHFLSLGGNSLKATLMLSKIQQTFNQKVSIGQFFSHQTVKELANFIRGEKNVKYPPMKPVEQKAFYRTSPAQQRVYFLHQMEPNQVSQNMFGQISIIGKYDEKALIASLQQVMQRHEAFRTSFHIIDGEIVQQIAGELDFNVRVHSMDREEFEAYADGYVKPFRLEQAPLVRAELIKVDNEQAELLIDMHHIISDGYSMSILTNELFALYHGNPLPEIPFEYKDFAEWQNQLLIGEVMEQQEEYWLEQFKQEVPILQLPADGSRAMEWSSEGQRVTCSLQSSLIRSLQEMAQQKGTTLYMVLLAAYNVLLHKYTGQEDIVVGTPVSGRNQPNIESMIGIFIQTMGIRTKPQANKRFTDYLDEVKRQTLDAFENQDYPFDWLVEKVNVQRETTGKSLFNTMFVYQNIEFQEIHQDGCTFRVKERNPGVSLYDLMLTIEDAEKQLDIHFDFNPNQFEQETIEQIIRHYTSLLDSLVKEPEKSLSSVPMLSDIERHQLLMGCNDTETPFPHNDTVCQWFETQAEQRPDDEAVIFGNERCTYGQLNERVNQLARTLRTKGVQADQFVAIICPHRIELIVGILAVLKAGGAYVPIDPEYPEDRIQYMLKDSEAKIVLAQLDLHKHLTFDADVVLLDEESSYHEDRSNLEPTCGANDLAYMIYTSGSTGNPKGVLIEHRGLANYIEWAKEVYVNDEKTNFPLYSSISFDLTVTSIFTPLVTGNTIIVFDGEDKSAVLSTIMQDPRIDIIKLTPAHLHVLKEMKIADGTTIRKMIVGGENLSTRLAQSVSEQFKGQLDIFNEYGPTEAVVGCMIYRYDTKRDRREFVPIGSPAANTSIYVLDASMNLVPVGVPGEMYIGGAGVARGYWNRPDLTAEKFVHNPFAPGTIMYKTGDLAKRLRDGNLIYLGRIDEQVKIRGHRIELGEVEAAMHKVEAVQKAVVLAREEEDGLQQLCAYYVSNKPITIAEIREQLSLELPDYMVPSHYIQLEQLPLTSNGKINRKALPAPEVSLEQIAEYVPPGNEVESKLAVLWQEMLGIHRVGIKHNFFDLGGNSIRATALAARIHKELDVNLSVKDIFKFPTIEQLANMALRMEKIRYVSIPSAQKISYYPVSSAQKRMYLLSHTEGGELTYNMTGAMSVEGAIDLERLTAAFQKLIERHEVLRTSFELYEGEPAQRIHPSIEFTIEQIQAREEEVEDHVLDFIKSFDLAKPPLMRVGLIELTPEKHVLLVDMHHIISDGVSMNILMKDLNQFYKGIEPDPLPIQYKDYAVWQQTEAQRQNIKKQEAYWLNRFHDEIPVLDMPTDYERPAIRDYEGESFEFLIPIELKQRLSQMEEATGTTLYMILMAAYTILLSKYSGQEDIVVGTPVSGRSHMDVESVVGMFVNTLVIRNHPAGRKIFEDYLNEVKENMLNAYQNQDYPLEELIQHVHLLKDSSRNPLFDTMFVLQNLDQVELNLDSLRFTPYKLHHTVAKFDLTLSIQTDQDKHHGLFEYSKKLFKKSRIEALSKDYLHILSVISQQPSIQIEHIELSGSTAEDDNLIHSIELNF</sequence>
<feature type="chain" id="PRO_0000360848" description="Mycosubtilin synthase subunit A">
    <location>
        <begin position="1"/>
        <end position="3971"/>
    </location>
</feature>
<feature type="domain" description="Carrier 1" evidence="2">
    <location>
        <begin position="578"/>
        <end position="653"/>
    </location>
</feature>
<feature type="domain" description="Ketosynthase family 3 (KS3)" evidence="3">
    <location>
        <begin position="669"/>
        <end position="1092"/>
    </location>
</feature>
<feature type="domain" description="Carrier 2" evidence="2">
    <location>
        <begin position="1290"/>
        <end position="1365"/>
    </location>
</feature>
<feature type="domain" description="Carrier 3" evidence="2">
    <location>
        <begin position="2405"/>
        <end position="2480"/>
    </location>
</feature>
<feature type="domain" description="Carrier 4" evidence="2">
    <location>
        <begin position="3442"/>
        <end position="3517"/>
    </location>
</feature>
<feature type="region of interest" description="Acyl-CoA ligase">
    <location>
        <begin position="160"/>
        <end position="479"/>
    </location>
</feature>
<feature type="region of interest" description="Disordered" evidence="4">
    <location>
        <begin position="1434"/>
        <end position="1456"/>
    </location>
</feature>
<feature type="region of interest" description="GSA-AT">
    <location>
        <begin position="1529"/>
        <end position="1856"/>
    </location>
</feature>
<feature type="region of interest" description="Disordered" evidence="4">
    <location>
        <begin position="1921"/>
        <end position="1942"/>
    </location>
</feature>
<feature type="region of interest" description="Condensation 1">
    <location>
        <begin position="1938"/>
        <end position="2240"/>
    </location>
</feature>
<feature type="region of interest" description="Condensation 2">
    <location>
        <begin position="2492"/>
        <end position="2781"/>
    </location>
</feature>
<feature type="region of interest" description="Domain 1 (asparagine-activating)">
    <location>
        <begin position="2937"/>
        <end position="3823"/>
    </location>
</feature>
<feature type="region of interest" description="Adenylation 1">
    <location>
        <begin position="2967"/>
        <end position="3364"/>
    </location>
</feature>
<feature type="region of interest" description="Condensation 3">
    <location>
        <begin position="3529"/>
        <end position="3818"/>
    </location>
</feature>
<feature type="compositionally biased region" description="Polar residues" evidence="4">
    <location>
        <begin position="1440"/>
        <end position="1456"/>
    </location>
</feature>
<feature type="active site" description="For beta-ketoacyl synthase activity" evidence="3">
    <location>
        <position position="843"/>
    </location>
</feature>
<feature type="active site" description="For beta-ketoacyl synthase activity" evidence="3">
    <location>
        <position position="974"/>
    </location>
</feature>
<feature type="active site" description="For beta-ketoacyl synthase activity" evidence="3">
    <location>
        <position position="1014"/>
    </location>
</feature>
<feature type="modified residue" description="O-(pantetheine 4'-phosphoryl)serine" evidence="2">
    <location>
        <position position="613"/>
    </location>
</feature>
<feature type="modified residue" description="O-(pantetheine 4'-phosphoryl)serine" evidence="2">
    <location>
        <position position="1324"/>
    </location>
</feature>
<feature type="modified residue" description="N6-(pyridoxal phosphate)lysine" evidence="1">
    <location>
        <position position="1759"/>
    </location>
</feature>
<feature type="modified residue" description="O-(pantetheine 4'-phosphoryl)serine" evidence="2">
    <location>
        <position position="2440"/>
    </location>
</feature>
<feature type="modified residue" description="O-(pantetheine 4'-phosphoryl)serine" evidence="2">
    <location>
        <position position="3477"/>
    </location>
</feature>
<feature type="helix" evidence="8">
    <location>
        <begin position="1288"/>
        <end position="1304"/>
    </location>
</feature>
<feature type="helix" evidence="8">
    <location>
        <begin position="1308"/>
        <end position="1310"/>
    </location>
</feature>
<feature type="strand" evidence="8">
    <location>
        <begin position="1313"/>
        <end position="1315"/>
    </location>
</feature>
<feature type="helix" evidence="8">
    <location>
        <begin position="1317"/>
        <end position="1320"/>
    </location>
</feature>
<feature type="helix" evidence="8">
    <location>
        <begin position="1324"/>
        <end position="1337"/>
    </location>
</feature>
<feature type="helix" evidence="8">
    <location>
        <begin position="1344"/>
        <end position="1348"/>
    </location>
</feature>
<feature type="helix" evidence="8">
    <location>
        <begin position="1354"/>
        <end position="1361"/>
    </location>
</feature>
<feature type="helix" evidence="7">
    <location>
        <begin position="1478"/>
        <end position="1494"/>
    </location>
</feature>
<feature type="helix" evidence="7">
    <location>
        <begin position="1496"/>
        <end position="1505"/>
    </location>
</feature>
<feature type="turn" evidence="7">
    <location>
        <begin position="1506"/>
        <end position="1508"/>
    </location>
</feature>
<feature type="helix" evidence="7">
    <location>
        <begin position="1512"/>
        <end position="1515"/>
    </location>
</feature>
<feature type="helix" evidence="7">
    <location>
        <begin position="1520"/>
        <end position="1525"/>
    </location>
</feature>
<feature type="strand" evidence="7">
    <location>
        <begin position="1530"/>
        <end position="1536"/>
    </location>
</feature>
<feature type="strand" evidence="7">
    <location>
        <begin position="1538"/>
        <end position="1541"/>
    </location>
</feature>
<feature type="strand" evidence="7">
    <location>
        <begin position="1546"/>
        <end position="1551"/>
    </location>
</feature>
<feature type="helix" evidence="7">
    <location>
        <begin position="1552"/>
        <end position="1555"/>
    </location>
</feature>
<feature type="helix" evidence="7">
    <location>
        <begin position="1564"/>
        <end position="1575"/>
    </location>
</feature>
<feature type="strand" evidence="7">
    <location>
        <begin position="1581"/>
        <end position="1587"/>
    </location>
</feature>
<feature type="helix" evidence="7">
    <location>
        <begin position="1588"/>
        <end position="1599"/>
    </location>
</feature>
<feature type="strand" evidence="7">
    <location>
        <begin position="1602"/>
        <end position="1609"/>
    </location>
</feature>
<feature type="helix" evidence="7">
    <location>
        <begin position="1610"/>
        <end position="1625"/>
    </location>
</feature>
<feature type="strand" evidence="7">
    <location>
        <begin position="1629"/>
        <end position="1633"/>
    </location>
</feature>
<feature type="helix" evidence="7">
    <location>
        <begin position="1642"/>
        <end position="1644"/>
    </location>
</feature>
<feature type="strand" evidence="7">
    <location>
        <begin position="1658"/>
        <end position="1661"/>
    </location>
</feature>
<feature type="helix" evidence="7">
    <location>
        <begin position="1666"/>
        <end position="1669"/>
    </location>
</feature>
<feature type="strand" evidence="7">
    <location>
        <begin position="1672"/>
        <end position="1675"/>
    </location>
</feature>
<feature type="helix" evidence="7">
    <location>
        <begin position="1680"/>
        <end position="1689"/>
    </location>
</feature>
<feature type="helix" evidence="7">
    <location>
        <begin position="1690"/>
        <end position="1692"/>
    </location>
</feature>
<feature type="strand" evidence="7">
    <location>
        <begin position="1693"/>
        <end position="1698"/>
    </location>
</feature>
<feature type="helix" evidence="7">
    <location>
        <begin position="1711"/>
        <end position="1724"/>
    </location>
</feature>
<feature type="strand" evidence="7">
    <location>
        <begin position="1727"/>
        <end position="1731"/>
    </location>
</feature>
<feature type="turn" evidence="7">
    <location>
        <begin position="1733"/>
        <end position="1738"/>
    </location>
</feature>
<feature type="helix" evidence="7">
    <location>
        <begin position="1743"/>
        <end position="1748"/>
    </location>
</feature>
<feature type="strand" evidence="7">
    <location>
        <begin position="1753"/>
        <end position="1758"/>
    </location>
</feature>
<feature type="helix" evidence="7">
    <location>
        <begin position="1759"/>
        <end position="1762"/>
    </location>
</feature>
<feature type="strand" evidence="7">
    <location>
        <begin position="1768"/>
        <end position="1772"/>
    </location>
</feature>
<feature type="helix" evidence="7">
    <location>
        <begin position="1774"/>
        <end position="1781"/>
    </location>
</feature>
<feature type="strand" evidence="7">
    <location>
        <begin position="1787"/>
        <end position="1790"/>
    </location>
</feature>
<feature type="helix" evidence="7">
    <location>
        <begin position="1796"/>
        <end position="1798"/>
    </location>
</feature>
<feature type="turn" evidence="7">
    <location>
        <begin position="1805"/>
        <end position="1808"/>
    </location>
</feature>
<feature type="helix" evidence="7">
    <location>
        <begin position="1810"/>
        <end position="1826"/>
    </location>
</feature>
<feature type="helix" evidence="7">
    <location>
        <begin position="1828"/>
        <end position="1851"/>
    </location>
</feature>
<feature type="strand" evidence="7">
    <location>
        <begin position="1855"/>
        <end position="1861"/>
    </location>
</feature>
<feature type="strand" evidence="7">
    <location>
        <begin position="1864"/>
        <end position="1871"/>
    </location>
</feature>
<feature type="helix" evidence="7">
    <location>
        <begin position="1873"/>
        <end position="1882"/>
    </location>
</feature>
<feature type="helix" evidence="7">
    <location>
        <begin position="1901"/>
        <end position="1920"/>
    </location>
</feature>
<name>MYCA_BACIU</name>
<comment type="function">
    <text evidence="5">This protein is a multifunctional enzyme, able to activate a long chain fatty acid and link it with the amino acid Asn as part of the synthesis of mycosubtilin. The activation sites consist of individual domains.</text>
</comment>
<comment type="cofactor">
    <cofactor evidence="5">
        <name>pyridoxal 5'-phosphate</name>
        <dbReference type="ChEBI" id="CHEBI:597326"/>
    </cofactor>
</comment>
<comment type="cofactor">
    <cofactor evidence="6">
        <name>pantetheine 4'-phosphate</name>
        <dbReference type="ChEBI" id="CHEBI:47942"/>
    </cofactor>
    <text evidence="6">Binds 2 phosphopantetheines covalently.</text>
</comment>
<comment type="similarity">
    <text evidence="6">Belongs to the ATP-dependent AMP-binding enzyme family.</text>
</comment>
<keyword id="KW-0002">3D-structure</keyword>
<keyword id="KW-0045">Antibiotic biosynthesis</keyword>
<keyword id="KW-0436">Ligase</keyword>
<keyword id="KW-0511">Multifunctional enzyme</keyword>
<keyword id="KW-0596">Phosphopantetheine</keyword>
<keyword id="KW-0597">Phosphoprotein</keyword>
<keyword id="KW-0663">Pyridoxal phosphate</keyword>
<keyword id="KW-0677">Repeat</keyword>
<keyword id="KW-0808">Transferase</keyword>
<evidence type="ECO:0000250" key="1"/>
<evidence type="ECO:0000255" key="2">
    <source>
        <dbReference type="PROSITE-ProRule" id="PRU00258"/>
    </source>
</evidence>
<evidence type="ECO:0000255" key="3">
    <source>
        <dbReference type="PROSITE-ProRule" id="PRU01348"/>
    </source>
</evidence>
<evidence type="ECO:0000256" key="4">
    <source>
        <dbReference type="SAM" id="MobiDB-lite"/>
    </source>
</evidence>
<evidence type="ECO:0000269" key="5">
    <source>
    </source>
</evidence>
<evidence type="ECO:0000305" key="6"/>
<evidence type="ECO:0007829" key="7">
    <source>
        <dbReference type="PDB" id="6KFM"/>
    </source>
</evidence>
<evidence type="ECO:0007829" key="8">
    <source>
        <dbReference type="PDB" id="6KFU"/>
    </source>
</evidence>
<protein>
    <recommendedName>
        <fullName>Mycosubtilin synthase subunit A</fullName>
        <ecNumber>2.3.1.-</ecNumber>
    </recommendedName>
    <domain>
        <recommendedName>
            <fullName>Glutamate-1-semialdehyde aminotransferase</fullName>
            <shortName>GSA-AT</shortName>
        </recommendedName>
    </domain>
    <domain>
        <recommendedName>
            <fullName>ATP-dependent asparagine adenylase 1</fullName>
            <shortName>AsnA 1</shortName>
        </recommendedName>
        <alternativeName>
            <fullName>Asparagine activase 1</fullName>
        </alternativeName>
    </domain>
</protein>
<dbReference type="EC" id="2.3.1.-"/>
<dbReference type="EMBL" id="AF184956">
    <property type="protein sequence ID" value="AAF08795.1"/>
    <property type="molecule type" value="Genomic_DNA"/>
</dbReference>
<dbReference type="PIR" id="T44806">
    <property type="entry name" value="T44806"/>
</dbReference>
<dbReference type="PDB" id="6KFM">
    <property type="method" value="X-ray"/>
    <property type="resolution" value="1.70 A"/>
    <property type="chains" value="A/B=1470-1930"/>
</dbReference>
<dbReference type="PDB" id="6KFR">
    <property type="method" value="X-ray"/>
    <property type="resolution" value="3.10 A"/>
    <property type="chains" value="A/B=1470-1930"/>
</dbReference>
<dbReference type="PDB" id="6KFU">
    <property type="method" value="X-ray"/>
    <property type="resolution" value="2.20 A"/>
    <property type="chains" value="A=1282-1370, A=1470-1930"/>
</dbReference>
<dbReference type="PDBsum" id="6KFM"/>
<dbReference type="PDBsum" id="6KFR"/>
<dbReference type="PDBsum" id="6KFU"/>
<dbReference type="SMR" id="Q9R9J1"/>
<dbReference type="STRING" id="483913.AN935_09470"/>
<dbReference type="SABIO-RK" id="Q9R9J1"/>
<dbReference type="GO" id="GO:0005829">
    <property type="term" value="C:cytosol"/>
    <property type="evidence" value="ECO:0007669"/>
    <property type="project" value="TreeGrafter"/>
</dbReference>
<dbReference type="GO" id="GO:0004315">
    <property type="term" value="F:3-oxoacyl-[acyl-carrier-protein] synthase activity"/>
    <property type="evidence" value="ECO:0007669"/>
    <property type="project" value="InterPro"/>
</dbReference>
<dbReference type="GO" id="GO:0016874">
    <property type="term" value="F:ligase activity"/>
    <property type="evidence" value="ECO:0007669"/>
    <property type="project" value="UniProtKB-KW"/>
</dbReference>
<dbReference type="GO" id="GO:0031177">
    <property type="term" value="F:phosphopantetheine binding"/>
    <property type="evidence" value="ECO:0007669"/>
    <property type="project" value="InterPro"/>
</dbReference>
<dbReference type="GO" id="GO:0030170">
    <property type="term" value="F:pyridoxal phosphate binding"/>
    <property type="evidence" value="ECO:0007669"/>
    <property type="project" value="InterPro"/>
</dbReference>
<dbReference type="GO" id="GO:0008483">
    <property type="term" value="F:transaminase activity"/>
    <property type="evidence" value="ECO:0007669"/>
    <property type="project" value="InterPro"/>
</dbReference>
<dbReference type="GO" id="GO:0043041">
    <property type="term" value="P:amino acid activation for nonribosomal peptide biosynthetic process"/>
    <property type="evidence" value="ECO:0007669"/>
    <property type="project" value="TreeGrafter"/>
</dbReference>
<dbReference type="GO" id="GO:0017000">
    <property type="term" value="P:antibiotic biosynthetic process"/>
    <property type="evidence" value="ECO:0007669"/>
    <property type="project" value="UniProtKB-KW"/>
</dbReference>
<dbReference type="GO" id="GO:0006633">
    <property type="term" value="P:fatty acid biosynthetic process"/>
    <property type="evidence" value="ECO:0007669"/>
    <property type="project" value="InterPro"/>
</dbReference>
<dbReference type="GO" id="GO:0044550">
    <property type="term" value="P:secondary metabolite biosynthetic process"/>
    <property type="evidence" value="ECO:0007669"/>
    <property type="project" value="TreeGrafter"/>
</dbReference>
<dbReference type="CDD" id="cd05908">
    <property type="entry name" value="A_NRPS_MycA_like"/>
    <property type="match status" value="1"/>
</dbReference>
<dbReference type="CDD" id="cd19531">
    <property type="entry name" value="LCL_NRPS-like"/>
    <property type="match status" value="3"/>
</dbReference>
<dbReference type="CDD" id="cd00610">
    <property type="entry name" value="OAT_like"/>
    <property type="match status" value="1"/>
</dbReference>
<dbReference type="CDD" id="cd00833">
    <property type="entry name" value="PKS"/>
    <property type="match status" value="1"/>
</dbReference>
<dbReference type="FunFam" id="3.30.300.30:FF:000010">
    <property type="entry name" value="Enterobactin synthetase component F"/>
    <property type="match status" value="1"/>
</dbReference>
<dbReference type="FunFam" id="3.40.50.12780:FF:000012">
    <property type="entry name" value="Non-ribosomal peptide synthetase"/>
    <property type="match status" value="1"/>
</dbReference>
<dbReference type="FunFam" id="3.40.50.980:FF:000001">
    <property type="entry name" value="Non-ribosomal peptide synthetase"/>
    <property type="match status" value="1"/>
</dbReference>
<dbReference type="FunFam" id="2.30.38.10:FF:000001">
    <property type="entry name" value="Non-ribosomal peptide synthetase PvdI"/>
    <property type="match status" value="1"/>
</dbReference>
<dbReference type="FunFam" id="1.10.1200.10:FF:000005">
    <property type="entry name" value="Nonribosomal peptide synthetase 1"/>
    <property type="match status" value="2"/>
</dbReference>
<dbReference type="Gene3D" id="1.10.1240.100">
    <property type="match status" value="1"/>
</dbReference>
<dbReference type="Gene3D" id="3.30.300.30">
    <property type="match status" value="2"/>
</dbReference>
<dbReference type="Gene3D" id="3.40.47.10">
    <property type="match status" value="1"/>
</dbReference>
<dbReference type="Gene3D" id="3.40.50.980">
    <property type="match status" value="2"/>
</dbReference>
<dbReference type="Gene3D" id="1.10.1200.10">
    <property type="entry name" value="ACP-like"/>
    <property type="match status" value="4"/>
</dbReference>
<dbReference type="Gene3D" id="3.90.1150.10">
    <property type="entry name" value="Aspartate Aminotransferase, domain 1"/>
    <property type="match status" value="1"/>
</dbReference>
<dbReference type="Gene3D" id="3.30.559.10">
    <property type="entry name" value="Chloramphenicol acetyltransferase-like domain"/>
    <property type="match status" value="3"/>
</dbReference>
<dbReference type="Gene3D" id="2.30.38.10">
    <property type="entry name" value="Luciferase, Domain 3"/>
    <property type="match status" value="1"/>
</dbReference>
<dbReference type="Gene3D" id="3.40.50.12780">
    <property type="entry name" value="N-terminal domain of ligase-like"/>
    <property type="match status" value="1"/>
</dbReference>
<dbReference type="Gene3D" id="3.30.559.30">
    <property type="entry name" value="Nonribosomal peptide synthetase, condensation domain"/>
    <property type="match status" value="3"/>
</dbReference>
<dbReference type="Gene3D" id="3.40.640.10">
    <property type="entry name" value="Type I PLP-dependent aspartate aminotransferase-like (Major domain)"/>
    <property type="match status" value="1"/>
</dbReference>
<dbReference type="InterPro" id="IPR010071">
    <property type="entry name" value="AA_adenyl_dom"/>
</dbReference>
<dbReference type="InterPro" id="IPR036736">
    <property type="entry name" value="ACP-like_sf"/>
</dbReference>
<dbReference type="InterPro" id="IPR005814">
    <property type="entry name" value="Aminotrans_3"/>
</dbReference>
<dbReference type="InterPro" id="IPR049704">
    <property type="entry name" value="Aminotrans_3_PPA_site"/>
</dbReference>
<dbReference type="InterPro" id="IPR025110">
    <property type="entry name" value="AMP-bd_C"/>
</dbReference>
<dbReference type="InterPro" id="IPR045851">
    <property type="entry name" value="AMP-bd_C_sf"/>
</dbReference>
<dbReference type="InterPro" id="IPR020845">
    <property type="entry name" value="AMP-binding_CS"/>
</dbReference>
<dbReference type="InterPro" id="IPR000873">
    <property type="entry name" value="AMP-dep_synth/lig_dom"/>
</dbReference>
<dbReference type="InterPro" id="IPR042099">
    <property type="entry name" value="ANL_N_sf"/>
</dbReference>
<dbReference type="InterPro" id="IPR023213">
    <property type="entry name" value="CAT-like_dom_sf"/>
</dbReference>
<dbReference type="InterPro" id="IPR001242">
    <property type="entry name" value="Condensatn"/>
</dbReference>
<dbReference type="InterPro" id="IPR018201">
    <property type="entry name" value="Ketoacyl_synth_AS"/>
</dbReference>
<dbReference type="InterPro" id="IPR014031">
    <property type="entry name" value="Ketoacyl_synth_C"/>
</dbReference>
<dbReference type="InterPro" id="IPR014030">
    <property type="entry name" value="Ketoacyl_synth_N"/>
</dbReference>
<dbReference type="InterPro" id="IPR020841">
    <property type="entry name" value="PKS_Beta-ketoAc_synthase_dom"/>
</dbReference>
<dbReference type="InterPro" id="IPR020806">
    <property type="entry name" value="PKS_PP-bd"/>
</dbReference>
<dbReference type="InterPro" id="IPR009081">
    <property type="entry name" value="PP-bd_ACP"/>
</dbReference>
<dbReference type="InterPro" id="IPR006162">
    <property type="entry name" value="Ppantetheine_attach_site"/>
</dbReference>
<dbReference type="InterPro" id="IPR015424">
    <property type="entry name" value="PyrdxlP-dep_Trfase"/>
</dbReference>
<dbReference type="InterPro" id="IPR015421">
    <property type="entry name" value="PyrdxlP-dep_Trfase_major"/>
</dbReference>
<dbReference type="InterPro" id="IPR015422">
    <property type="entry name" value="PyrdxlP-dep_Trfase_small"/>
</dbReference>
<dbReference type="InterPro" id="IPR016039">
    <property type="entry name" value="Thiolase-like"/>
</dbReference>
<dbReference type="NCBIfam" id="TIGR01733">
    <property type="entry name" value="AA-adenyl-dom"/>
    <property type="match status" value="1"/>
</dbReference>
<dbReference type="PANTHER" id="PTHR45527:SF1">
    <property type="entry name" value="FATTY ACID SYNTHASE"/>
    <property type="match status" value="1"/>
</dbReference>
<dbReference type="PANTHER" id="PTHR45527">
    <property type="entry name" value="NONRIBOSOMAL PEPTIDE SYNTHETASE"/>
    <property type="match status" value="1"/>
</dbReference>
<dbReference type="Pfam" id="PF00202">
    <property type="entry name" value="Aminotran_3"/>
    <property type="match status" value="1"/>
</dbReference>
<dbReference type="Pfam" id="PF00501">
    <property type="entry name" value="AMP-binding"/>
    <property type="match status" value="2"/>
</dbReference>
<dbReference type="Pfam" id="PF13193">
    <property type="entry name" value="AMP-binding_C"/>
    <property type="match status" value="1"/>
</dbReference>
<dbReference type="Pfam" id="PF00668">
    <property type="entry name" value="Condensation"/>
    <property type="match status" value="3"/>
</dbReference>
<dbReference type="Pfam" id="PF22621">
    <property type="entry name" value="CurL-like_PKS_C"/>
    <property type="match status" value="1"/>
</dbReference>
<dbReference type="Pfam" id="PF00109">
    <property type="entry name" value="ketoacyl-synt"/>
    <property type="match status" value="1"/>
</dbReference>
<dbReference type="Pfam" id="PF02801">
    <property type="entry name" value="Ketoacyl-synt_C"/>
    <property type="match status" value="1"/>
</dbReference>
<dbReference type="Pfam" id="PF00550">
    <property type="entry name" value="PP-binding"/>
    <property type="match status" value="4"/>
</dbReference>
<dbReference type="SMART" id="SM00825">
    <property type="entry name" value="PKS_KS"/>
    <property type="match status" value="1"/>
</dbReference>
<dbReference type="SMART" id="SM00823">
    <property type="entry name" value="PKS_PP"/>
    <property type="match status" value="4"/>
</dbReference>
<dbReference type="SUPFAM" id="SSF56801">
    <property type="entry name" value="Acetyl-CoA synthetase-like"/>
    <property type="match status" value="2"/>
</dbReference>
<dbReference type="SUPFAM" id="SSF47336">
    <property type="entry name" value="ACP-like"/>
    <property type="match status" value="4"/>
</dbReference>
<dbReference type="SUPFAM" id="SSF52777">
    <property type="entry name" value="CoA-dependent acyltransferases"/>
    <property type="match status" value="6"/>
</dbReference>
<dbReference type="SUPFAM" id="SSF53383">
    <property type="entry name" value="PLP-dependent transferases"/>
    <property type="match status" value="1"/>
</dbReference>
<dbReference type="SUPFAM" id="SSF53901">
    <property type="entry name" value="Thiolase-like"/>
    <property type="match status" value="1"/>
</dbReference>
<dbReference type="PROSITE" id="PS00600">
    <property type="entry name" value="AA_TRANSFER_CLASS_3"/>
    <property type="match status" value="1"/>
</dbReference>
<dbReference type="PROSITE" id="PS00455">
    <property type="entry name" value="AMP_BINDING"/>
    <property type="match status" value="2"/>
</dbReference>
<dbReference type="PROSITE" id="PS50075">
    <property type="entry name" value="CARRIER"/>
    <property type="match status" value="4"/>
</dbReference>
<dbReference type="PROSITE" id="PS00606">
    <property type="entry name" value="KS3_1"/>
    <property type="match status" value="1"/>
</dbReference>
<dbReference type="PROSITE" id="PS52004">
    <property type="entry name" value="KS3_2"/>
    <property type="match status" value="1"/>
</dbReference>
<dbReference type="PROSITE" id="PS00012">
    <property type="entry name" value="PHOSPHOPANTETHEINE"/>
    <property type="match status" value="2"/>
</dbReference>